<accession>A5VIN9</accession>
<protein>
    <recommendedName>
        <fullName evidence="1">Arginine deiminase</fullName>
        <shortName evidence="1">ADI</shortName>
        <ecNumber evidence="1">3.5.3.6</ecNumber>
    </recommendedName>
    <alternativeName>
        <fullName evidence="1">Arginine dihydrolase</fullName>
        <shortName evidence="1">AD</shortName>
    </alternativeName>
</protein>
<organism>
    <name type="scientific">Limosilactobacillus reuteri (strain DSM 20016)</name>
    <name type="common">Lactobacillus reuteri</name>
    <dbReference type="NCBI Taxonomy" id="557436"/>
    <lineage>
        <taxon>Bacteria</taxon>
        <taxon>Bacillati</taxon>
        <taxon>Bacillota</taxon>
        <taxon>Bacilli</taxon>
        <taxon>Lactobacillales</taxon>
        <taxon>Lactobacillaceae</taxon>
        <taxon>Limosilactobacillus</taxon>
    </lineage>
</organism>
<reference key="1">
    <citation type="journal article" date="2011" name="PLoS Genet.">
        <title>The evolution of host specialization in the vertebrate gut symbiont Lactobacillus reuteri.</title>
        <authorList>
            <person name="Frese S.A."/>
            <person name="Benson A.K."/>
            <person name="Tannock G.W."/>
            <person name="Loach D.M."/>
            <person name="Kim J."/>
            <person name="Zhang M."/>
            <person name="Oh P.L."/>
            <person name="Heng N.C."/>
            <person name="Patil P.B."/>
            <person name="Juge N."/>
            <person name="Mackenzie D.A."/>
            <person name="Pearson B.M."/>
            <person name="Lapidus A."/>
            <person name="Dalin E."/>
            <person name="Tice H."/>
            <person name="Goltsman E."/>
            <person name="Land M."/>
            <person name="Hauser L."/>
            <person name="Ivanova N."/>
            <person name="Kyrpides N.C."/>
            <person name="Walter J."/>
        </authorList>
    </citation>
    <scope>NUCLEOTIDE SEQUENCE [LARGE SCALE GENOMIC DNA]</scope>
    <source>
        <strain>DSM 20016</strain>
    </source>
</reference>
<keyword id="KW-0056">Arginine metabolism</keyword>
<keyword id="KW-0963">Cytoplasm</keyword>
<keyword id="KW-0378">Hydrolase</keyword>
<keyword id="KW-1185">Reference proteome</keyword>
<name>ARCA_LIMRD</name>
<dbReference type="EC" id="3.5.3.6" evidence="1"/>
<dbReference type="EMBL" id="CP000705">
    <property type="protein sequence ID" value="ABQ82713.1"/>
    <property type="molecule type" value="Genomic_DNA"/>
</dbReference>
<dbReference type="RefSeq" id="WP_003667540.1">
    <property type="nucleotide sequence ID" value="NZ_AZDD01000022.1"/>
</dbReference>
<dbReference type="SMR" id="A5VIN9"/>
<dbReference type="STRING" id="557436.Lreu_0445"/>
<dbReference type="KEGG" id="lre:Lreu_0445"/>
<dbReference type="PATRIC" id="fig|557436.17.peg.864"/>
<dbReference type="eggNOG" id="COG2235">
    <property type="taxonomic scope" value="Bacteria"/>
</dbReference>
<dbReference type="HOGENOM" id="CLU_052662_0_1_9"/>
<dbReference type="UniPathway" id="UPA00254">
    <property type="reaction ID" value="UER00364"/>
</dbReference>
<dbReference type="Proteomes" id="UP000001991">
    <property type="component" value="Chromosome"/>
</dbReference>
<dbReference type="GO" id="GO:0005737">
    <property type="term" value="C:cytoplasm"/>
    <property type="evidence" value="ECO:0007669"/>
    <property type="project" value="UniProtKB-SubCell"/>
</dbReference>
<dbReference type="GO" id="GO:0016990">
    <property type="term" value="F:arginine deiminase activity"/>
    <property type="evidence" value="ECO:0007669"/>
    <property type="project" value="UniProtKB-UniRule"/>
</dbReference>
<dbReference type="GO" id="GO:0019547">
    <property type="term" value="P:arginine catabolic process to ornithine"/>
    <property type="evidence" value="ECO:0007669"/>
    <property type="project" value="UniProtKB-UniRule"/>
</dbReference>
<dbReference type="GO" id="GO:0019546">
    <property type="term" value="P:arginine deiminase pathway"/>
    <property type="evidence" value="ECO:0007669"/>
    <property type="project" value="TreeGrafter"/>
</dbReference>
<dbReference type="Gene3D" id="1.10.3930.10">
    <property type="entry name" value="Arginine deiminase"/>
    <property type="match status" value="1"/>
</dbReference>
<dbReference type="Gene3D" id="3.75.10.10">
    <property type="entry name" value="L-arginine/glycine Amidinotransferase, Chain A"/>
    <property type="match status" value="1"/>
</dbReference>
<dbReference type="HAMAP" id="MF_00242">
    <property type="entry name" value="Arg_deiminase"/>
    <property type="match status" value="1"/>
</dbReference>
<dbReference type="InterPro" id="IPR003876">
    <property type="entry name" value="Arg_deiminase"/>
</dbReference>
<dbReference type="NCBIfam" id="TIGR01078">
    <property type="entry name" value="arcA"/>
    <property type="match status" value="1"/>
</dbReference>
<dbReference type="NCBIfam" id="NF002381">
    <property type="entry name" value="PRK01388.1"/>
    <property type="match status" value="1"/>
</dbReference>
<dbReference type="PANTHER" id="PTHR47271">
    <property type="entry name" value="ARGININE DEIMINASE"/>
    <property type="match status" value="1"/>
</dbReference>
<dbReference type="PANTHER" id="PTHR47271:SF2">
    <property type="entry name" value="ARGININE DEIMINASE"/>
    <property type="match status" value="1"/>
</dbReference>
<dbReference type="Pfam" id="PF02274">
    <property type="entry name" value="ADI"/>
    <property type="match status" value="1"/>
</dbReference>
<dbReference type="PIRSF" id="PIRSF006356">
    <property type="entry name" value="Arg_deiminase"/>
    <property type="match status" value="1"/>
</dbReference>
<dbReference type="PRINTS" id="PR01466">
    <property type="entry name" value="ARGDEIMINASE"/>
</dbReference>
<dbReference type="SUPFAM" id="SSF55909">
    <property type="entry name" value="Pentein"/>
    <property type="match status" value="1"/>
</dbReference>
<evidence type="ECO:0000255" key="1">
    <source>
        <dbReference type="HAMAP-Rule" id="MF_00242"/>
    </source>
</evidence>
<proteinExistence type="inferred from homology"/>
<feature type="chain" id="PRO_0000336666" description="Arginine deiminase">
    <location>
        <begin position="1"/>
        <end position="410"/>
    </location>
</feature>
<feature type="active site" description="Amidino-cysteine intermediate" evidence="1">
    <location>
        <position position="398"/>
    </location>
</feature>
<comment type="catalytic activity">
    <reaction evidence="1">
        <text>L-arginine + H2O = L-citrulline + NH4(+)</text>
        <dbReference type="Rhea" id="RHEA:19597"/>
        <dbReference type="ChEBI" id="CHEBI:15377"/>
        <dbReference type="ChEBI" id="CHEBI:28938"/>
        <dbReference type="ChEBI" id="CHEBI:32682"/>
        <dbReference type="ChEBI" id="CHEBI:57743"/>
        <dbReference type="EC" id="3.5.3.6"/>
    </reaction>
</comment>
<comment type="pathway">
    <text evidence="1">Amino-acid degradation; L-arginine degradation via ADI pathway; carbamoyl phosphate from L-arginine: step 1/2.</text>
</comment>
<comment type="subcellular location">
    <subcellularLocation>
        <location evidence="1">Cytoplasm</location>
    </subcellularLocation>
</comment>
<comment type="similarity">
    <text evidence="1">Belongs to the arginine deiminase family.</text>
</comment>
<gene>
    <name evidence="1" type="primary">arcA</name>
    <name type="ordered locus">Lreu_0445</name>
</gene>
<sequence>MQSPIHVTSEIGKLKTVMLHRPGKEIENVYPEILHRMLVDDIPYLPIAQEEHDLFAQTLRDNGAEVLYLEDLLTDALADDNIKDEFLEKIIAESGYAAGAIHDGLKEFLLSFSTKDMVNKIIAGVRKDEIKTKYASLAELAEDKDYPFYMDPMPNAYFTRDQQACIGDGITINHMTFKARQRESLFTEYIIKHNKRFADKGVEVWRNRYPEGRIEGGDELVLSDHVLAIGISQRTSAKAITELAESLFEKSDYDTVIAIHIPHNHAMMHLDTVFTMINYDQFTVHPAILRDGGHVDAYIMHPGNNGEISITHETNLKEILKKALDKPEIDLIPTGGGDPIIAPREQWNDGSNTLAIAPGVVVTYDRNYVSNDLLRKHGILVHEVRSSELSRGRGGPRCMSCPIVREDLKK</sequence>